<reference key="1">
    <citation type="journal article" date="2000" name="Nature">
        <title>The complete sequence of the mucosal pathogen Ureaplasma urealyticum.</title>
        <authorList>
            <person name="Glass J.I."/>
            <person name="Lefkowitz E.J."/>
            <person name="Glass J.S."/>
            <person name="Heiner C.R."/>
            <person name="Chen E.Y."/>
            <person name="Cassell G.H."/>
        </authorList>
    </citation>
    <scope>NUCLEOTIDE SEQUENCE [LARGE SCALE GENOMIC DNA]</scope>
    <source>
        <strain>ATCC 700970</strain>
    </source>
</reference>
<name>Y152_UREPA</name>
<dbReference type="EMBL" id="AF222894">
    <property type="protein sequence ID" value="AAF30558.1"/>
    <property type="molecule type" value="Genomic_DNA"/>
</dbReference>
<dbReference type="SMR" id="Q9PQZ2"/>
<dbReference type="STRING" id="273119.UU152"/>
<dbReference type="EnsemblBacteria" id="AAF30558">
    <property type="protein sequence ID" value="AAF30558"/>
    <property type="gene ID" value="UU152"/>
</dbReference>
<dbReference type="KEGG" id="uur:UU152"/>
<dbReference type="HOGENOM" id="CLU_2621032_0_0_14"/>
<dbReference type="Proteomes" id="UP000000423">
    <property type="component" value="Chromosome"/>
</dbReference>
<accession>Q9PQZ2</accession>
<sequence>MKLSRRLTNMTNWDKEHALSEELRQLKDEFEDLMDDLARINKDLDFNIWERKDLEYRKASYETDIESIRLRINQKQNEMMEIIKNDK</sequence>
<protein>
    <recommendedName>
        <fullName>Uncharacterized protein UU152</fullName>
    </recommendedName>
</protein>
<feature type="chain" id="PRO_0000220811" description="Uncharacterized protein UU152">
    <location>
        <begin position="1"/>
        <end position="87"/>
    </location>
</feature>
<proteinExistence type="predicted"/>
<organism>
    <name type="scientific">Ureaplasma parvum serovar 3 (strain ATCC 700970)</name>
    <dbReference type="NCBI Taxonomy" id="273119"/>
    <lineage>
        <taxon>Bacteria</taxon>
        <taxon>Bacillati</taxon>
        <taxon>Mycoplasmatota</taxon>
        <taxon>Mycoplasmoidales</taxon>
        <taxon>Mycoplasmoidaceae</taxon>
        <taxon>Ureaplasma</taxon>
    </lineage>
</organism>
<keyword id="KW-1185">Reference proteome</keyword>
<gene>
    <name type="ordered locus">UU152</name>
</gene>